<organism>
    <name type="scientific">Trichophyton verrucosum (strain HKI 0517)</name>
    <dbReference type="NCBI Taxonomy" id="663202"/>
    <lineage>
        <taxon>Eukaryota</taxon>
        <taxon>Fungi</taxon>
        <taxon>Dikarya</taxon>
        <taxon>Ascomycota</taxon>
        <taxon>Pezizomycotina</taxon>
        <taxon>Eurotiomycetes</taxon>
        <taxon>Eurotiomycetidae</taxon>
        <taxon>Onygenales</taxon>
        <taxon>Arthrodermataceae</taxon>
        <taxon>Trichophyton</taxon>
    </lineage>
</organism>
<reference key="1">
    <citation type="journal article" date="2011" name="Genome Biol.">
        <title>Comparative and functional genomics provide insights into the pathogenicity of dermatophytic fungi.</title>
        <authorList>
            <person name="Burmester A."/>
            <person name="Shelest E."/>
            <person name="Gloeckner G."/>
            <person name="Heddergott C."/>
            <person name="Schindler S."/>
            <person name="Staib P."/>
            <person name="Heidel A."/>
            <person name="Felder M."/>
            <person name="Petzold A."/>
            <person name="Szafranski K."/>
            <person name="Feuermann M."/>
            <person name="Pedruzzi I."/>
            <person name="Priebe S."/>
            <person name="Groth M."/>
            <person name="Winkler R."/>
            <person name="Li W."/>
            <person name="Kniemeyer O."/>
            <person name="Schroeckh V."/>
            <person name="Hertweck C."/>
            <person name="Hube B."/>
            <person name="White T.C."/>
            <person name="Platzer M."/>
            <person name="Guthke R."/>
            <person name="Heitman J."/>
            <person name="Woestemeyer J."/>
            <person name="Zipfel P.F."/>
            <person name="Monod M."/>
            <person name="Brakhage A.A."/>
        </authorList>
    </citation>
    <scope>NUCLEOTIDE SEQUENCE [LARGE SCALE GENOMIC DNA]</scope>
    <source>
        <strain>HKI 0517</strain>
    </source>
</reference>
<feature type="signal peptide" evidence="2">
    <location>
        <begin position="1"/>
        <end position="18"/>
    </location>
</feature>
<feature type="chain" id="PRO_0000397772" description="Probable leucine aminopeptidase TRV_05750">
    <location>
        <begin position="19"/>
        <end position="368"/>
    </location>
</feature>
<feature type="binding site" evidence="1">
    <location>
        <position position="172"/>
    </location>
    <ligand>
        <name>Zn(2+)</name>
        <dbReference type="ChEBI" id="CHEBI:29105"/>
        <label>1</label>
    </ligand>
</feature>
<feature type="binding site" evidence="1">
    <location>
        <position position="191"/>
    </location>
    <ligand>
        <name>Zn(2+)</name>
        <dbReference type="ChEBI" id="CHEBI:29105"/>
        <label>1</label>
    </ligand>
</feature>
<feature type="binding site" evidence="1">
    <location>
        <position position="191"/>
    </location>
    <ligand>
        <name>Zn(2+)</name>
        <dbReference type="ChEBI" id="CHEBI:29105"/>
        <label>2</label>
        <note>catalytic</note>
    </ligand>
</feature>
<feature type="binding site" evidence="1">
    <location>
        <position position="230"/>
    </location>
    <ligand>
        <name>Zn(2+)</name>
        <dbReference type="ChEBI" id="CHEBI:29105"/>
        <label>2</label>
        <note>catalytic</note>
    </ligand>
</feature>
<feature type="binding site" evidence="1">
    <location>
        <position position="257"/>
    </location>
    <ligand>
        <name>Zn(2+)</name>
        <dbReference type="ChEBI" id="CHEBI:29105"/>
        <label>1</label>
    </ligand>
</feature>
<feature type="binding site" evidence="1">
    <location>
        <position position="334"/>
    </location>
    <ligand>
        <name>Zn(2+)</name>
        <dbReference type="ChEBI" id="CHEBI:29105"/>
        <label>2</label>
        <note>catalytic</note>
    </ligand>
</feature>
<feature type="glycosylation site" description="N-linked (GlcNAc...) asparagine" evidence="2">
    <location>
        <position position="92"/>
    </location>
</feature>
<feature type="glycosylation site" description="N-linked (GlcNAc...) asparagine" evidence="2">
    <location>
        <position position="192"/>
    </location>
</feature>
<feature type="glycosylation site" description="N-linked (GlcNAc...) asparagine" evidence="2">
    <location>
        <position position="216"/>
    </location>
</feature>
<feature type="disulfide bond" evidence="1">
    <location>
        <begin position="301"/>
        <end position="305"/>
    </location>
</feature>
<evidence type="ECO:0000250" key="1"/>
<evidence type="ECO:0000255" key="2"/>
<evidence type="ECO:0000305" key="3"/>
<gene>
    <name type="ORF">TRV_05750</name>
</gene>
<comment type="function">
    <text evidence="1">Probable extracellular aminopeptidase which contributes to pathogenicity.</text>
</comment>
<comment type="cofactor">
    <cofactor evidence="1">
        <name>Zn(2+)</name>
        <dbReference type="ChEBI" id="CHEBI:29105"/>
    </cofactor>
    <text evidence="1">Binds 2 Zn(2+) ions per subunit.</text>
</comment>
<comment type="subunit">
    <text evidence="1">Monomer.</text>
</comment>
<comment type="subcellular location">
    <subcellularLocation>
        <location evidence="1">Secreted</location>
    </subcellularLocation>
</comment>
<comment type="similarity">
    <text evidence="3">Belongs to the peptidase M28 family. M28E subfamily.</text>
</comment>
<comment type="sequence caution" evidence="3">
    <conflict type="erroneous initiation">
        <sequence resource="EMBL-CDS" id="EFE39564"/>
    </conflict>
    <text>Extended N-terminus.</text>
</comment>
<protein>
    <recommendedName>
        <fullName>Probable leucine aminopeptidase TRV_05750</fullName>
        <ecNumber>3.4.11.-</ecNumber>
    </recommendedName>
    <alternativeName>
        <fullName>Leucyl aminopeptidase TRV_05750</fullName>
    </alternativeName>
</protein>
<keyword id="KW-0031">Aminopeptidase</keyword>
<keyword id="KW-1015">Disulfide bond</keyword>
<keyword id="KW-0325">Glycoprotein</keyword>
<keyword id="KW-0378">Hydrolase</keyword>
<keyword id="KW-0479">Metal-binding</keyword>
<keyword id="KW-0645">Protease</keyword>
<keyword id="KW-0964">Secreted</keyword>
<keyword id="KW-0732">Signal</keyword>
<keyword id="KW-0843">Virulence</keyword>
<keyword id="KW-0862">Zinc</keyword>
<accession>D4DF09</accession>
<dbReference type="EC" id="3.4.11.-"/>
<dbReference type="EMBL" id="ACYE01000321">
    <property type="protein sequence ID" value="EFE39564.1"/>
    <property type="status" value="ALT_INIT"/>
    <property type="molecule type" value="Genomic_DNA"/>
</dbReference>
<dbReference type="RefSeq" id="XP_003020182.1">
    <property type="nucleotide sequence ID" value="XM_003020136.1"/>
</dbReference>
<dbReference type="SMR" id="D4DF09"/>
<dbReference type="MEROPS" id="M28.022"/>
<dbReference type="GeneID" id="9583953"/>
<dbReference type="KEGG" id="tve:TRV_05750"/>
<dbReference type="HOGENOM" id="CLU_025866_0_0_1"/>
<dbReference type="OrthoDB" id="1894at34384"/>
<dbReference type="Proteomes" id="UP000008383">
    <property type="component" value="Unassembled WGS sequence"/>
</dbReference>
<dbReference type="GO" id="GO:0005576">
    <property type="term" value="C:extracellular region"/>
    <property type="evidence" value="ECO:0007669"/>
    <property type="project" value="UniProtKB-SubCell"/>
</dbReference>
<dbReference type="GO" id="GO:0004177">
    <property type="term" value="F:aminopeptidase activity"/>
    <property type="evidence" value="ECO:0007669"/>
    <property type="project" value="UniProtKB-KW"/>
</dbReference>
<dbReference type="GO" id="GO:0046872">
    <property type="term" value="F:metal ion binding"/>
    <property type="evidence" value="ECO:0007669"/>
    <property type="project" value="UniProtKB-KW"/>
</dbReference>
<dbReference type="GO" id="GO:0008235">
    <property type="term" value="F:metalloexopeptidase activity"/>
    <property type="evidence" value="ECO:0007669"/>
    <property type="project" value="InterPro"/>
</dbReference>
<dbReference type="GO" id="GO:0006508">
    <property type="term" value="P:proteolysis"/>
    <property type="evidence" value="ECO:0007669"/>
    <property type="project" value="UniProtKB-KW"/>
</dbReference>
<dbReference type="CDD" id="cd03879">
    <property type="entry name" value="M28_AAP"/>
    <property type="match status" value="1"/>
</dbReference>
<dbReference type="FunFam" id="3.40.630.10:FF:000042">
    <property type="entry name" value="Peptide hydrolase"/>
    <property type="match status" value="1"/>
</dbReference>
<dbReference type="Gene3D" id="3.40.630.10">
    <property type="entry name" value="Zn peptidases"/>
    <property type="match status" value="1"/>
</dbReference>
<dbReference type="InterPro" id="IPR045175">
    <property type="entry name" value="M28_fam"/>
</dbReference>
<dbReference type="InterPro" id="IPR007484">
    <property type="entry name" value="Peptidase_M28"/>
</dbReference>
<dbReference type="PANTHER" id="PTHR12147:SF56">
    <property type="entry name" value="AMINOPEPTIDASE YDR415C-RELATED"/>
    <property type="match status" value="1"/>
</dbReference>
<dbReference type="PANTHER" id="PTHR12147">
    <property type="entry name" value="METALLOPEPTIDASE M28 FAMILY MEMBER"/>
    <property type="match status" value="1"/>
</dbReference>
<dbReference type="Pfam" id="PF04389">
    <property type="entry name" value="Peptidase_M28"/>
    <property type="match status" value="1"/>
</dbReference>
<dbReference type="SUPFAM" id="SSF53187">
    <property type="entry name" value="Zn-dependent exopeptidases"/>
    <property type="match status" value="1"/>
</dbReference>
<name>LAP3_TRIVH</name>
<proteinExistence type="inferred from homology"/>
<sequence length="368" mass="39807">MKVFAIAAVAALTAVAVAGPVRPSGDKYLIELGPGKTQWVTKDQKHKMRAAGQTFIDITNEIGTNFVATKPVAANYPKNIAHSSMVSSMIANLSKENLMRDLQAMSEFNNRYYESQTGVESANWLMEQVKKVIDESGAQGAKVEKIDNQFNQFNIIATIPGSSESTVIVGAHQDSINQEDPMGGRAPGADDNGSGSVVVLEALRGVLGSKAFRAANNTNTLEFHWYAGEEGGLLGSQTVFSKYKSDGRQVKAMLNQDLAGFKGQGQEQFGLITDNTNQELNQFCKMIVEKYASIPIVDTECGYACSDHASADRNGFPASMVAETAFEDSNPHIHSADDTVEYLDFDHMLEHAKVALGFMTELGMASNL</sequence>